<proteinExistence type="evidence at protein level"/>
<evidence type="ECO:0000250" key="1"/>
<evidence type="ECO:0000269" key="2">
    <source>
    </source>
</evidence>
<evidence type="ECO:0000305" key="3"/>
<sequence>MAQSTTSETHTRDLDRDCTTLSRHVLEQLQSFSPEAQDLAALMQRIGLAAKLIARRLSHAGLVDDALGFTGEINVQGEAVKRMDVYANQVFISVFRQSGLVCRLASEEMEKPYYIPENCPIGRYTLLYDPLDGSANVDVDLNVGSIFAVRRQEFYDESHEAKDLLQPGDRQIAAGYVLYGASTLLVYSMGQGVHVFVLDPSLGEFVLAQSDIQLPNSGQIYSVNEGNFWQWPEGYRQYIREMHRREGYSGRYSGALVADFHRILMQGGVFLYPETVKNPTGKLRLLYEAAPMAFLAEQAGGKASDGQKPILLRQPQALHERCPLIIGSAADVDFVEACLAESVP</sequence>
<dbReference type="EC" id="3.1.3.11"/>
<dbReference type="EMBL" id="U33285">
    <property type="protein sequence ID" value="AAA98846.1"/>
    <property type="molecule type" value="Genomic_DNA"/>
</dbReference>
<dbReference type="EMBL" id="D49680">
    <property type="protein sequence ID" value="BAA08536.1"/>
    <property type="molecule type" value="Genomic_DNA"/>
</dbReference>
<dbReference type="EMBL" id="CP000100">
    <property type="protein sequence ID" value="ABB58365.1"/>
    <property type="molecule type" value="Genomic_DNA"/>
</dbReference>
<dbReference type="RefSeq" id="WP_011378409.1">
    <property type="nucleotide sequence ID" value="NZ_JACJTX010000001.1"/>
</dbReference>
<dbReference type="SMR" id="Q59943"/>
<dbReference type="STRING" id="1140.Synpcc7942_2335"/>
<dbReference type="PaxDb" id="1140-Synpcc7942_2335"/>
<dbReference type="GeneID" id="72431222"/>
<dbReference type="KEGG" id="syf:Synpcc7942_2335"/>
<dbReference type="eggNOG" id="COG0158">
    <property type="taxonomic scope" value="Bacteria"/>
</dbReference>
<dbReference type="HOGENOM" id="CLU_039977_2_2_3"/>
<dbReference type="OrthoDB" id="9806756at2"/>
<dbReference type="BioCyc" id="SYNEL:SYNPCC7942_2335-MONOMER"/>
<dbReference type="BRENDA" id="3.1.3.11">
    <property type="organism ID" value="325"/>
</dbReference>
<dbReference type="SABIO-RK" id="Q59943"/>
<dbReference type="UniPathway" id="UPA00116"/>
<dbReference type="Proteomes" id="UP000889800">
    <property type="component" value="Chromosome"/>
</dbReference>
<dbReference type="GO" id="GO:0005829">
    <property type="term" value="C:cytosol"/>
    <property type="evidence" value="ECO:0007669"/>
    <property type="project" value="TreeGrafter"/>
</dbReference>
<dbReference type="GO" id="GO:0042132">
    <property type="term" value="F:fructose 1,6-bisphosphate 1-phosphatase activity"/>
    <property type="evidence" value="ECO:0007669"/>
    <property type="project" value="UniProtKB-UniRule"/>
</dbReference>
<dbReference type="GO" id="GO:0000287">
    <property type="term" value="F:magnesium ion binding"/>
    <property type="evidence" value="ECO:0007669"/>
    <property type="project" value="UniProtKB-UniRule"/>
</dbReference>
<dbReference type="GO" id="GO:0030388">
    <property type="term" value="P:fructose 1,6-bisphosphate metabolic process"/>
    <property type="evidence" value="ECO:0007669"/>
    <property type="project" value="TreeGrafter"/>
</dbReference>
<dbReference type="GO" id="GO:0006002">
    <property type="term" value="P:fructose 6-phosphate metabolic process"/>
    <property type="evidence" value="ECO:0007669"/>
    <property type="project" value="TreeGrafter"/>
</dbReference>
<dbReference type="GO" id="GO:0006000">
    <property type="term" value="P:fructose metabolic process"/>
    <property type="evidence" value="ECO:0007669"/>
    <property type="project" value="TreeGrafter"/>
</dbReference>
<dbReference type="GO" id="GO:0006094">
    <property type="term" value="P:gluconeogenesis"/>
    <property type="evidence" value="ECO:0007669"/>
    <property type="project" value="UniProtKB-UniRule"/>
</dbReference>
<dbReference type="GO" id="GO:0019253">
    <property type="term" value="P:reductive pentose-phosphate cycle"/>
    <property type="evidence" value="ECO:0007669"/>
    <property type="project" value="UniProtKB-UniRule"/>
</dbReference>
<dbReference type="GO" id="GO:0005986">
    <property type="term" value="P:sucrose biosynthetic process"/>
    <property type="evidence" value="ECO:0007669"/>
    <property type="project" value="TreeGrafter"/>
</dbReference>
<dbReference type="CDD" id="cd00354">
    <property type="entry name" value="FBPase"/>
    <property type="match status" value="1"/>
</dbReference>
<dbReference type="FunFam" id="3.30.540.10:FF:000002">
    <property type="entry name" value="Fructose-1,6-bisphosphatase class 1"/>
    <property type="match status" value="1"/>
</dbReference>
<dbReference type="Gene3D" id="3.40.190.80">
    <property type="match status" value="1"/>
</dbReference>
<dbReference type="Gene3D" id="3.30.540.10">
    <property type="entry name" value="Fructose-1,6-Bisphosphatase, subunit A, domain 1"/>
    <property type="match status" value="1"/>
</dbReference>
<dbReference type="HAMAP" id="MF_01855">
    <property type="entry name" value="FBPase_class1"/>
    <property type="match status" value="1"/>
</dbReference>
<dbReference type="InterPro" id="IPR044015">
    <property type="entry name" value="FBPase_C_dom"/>
</dbReference>
<dbReference type="InterPro" id="IPR000146">
    <property type="entry name" value="FBPase_class-1"/>
</dbReference>
<dbReference type="InterPro" id="IPR033391">
    <property type="entry name" value="FBPase_N"/>
</dbReference>
<dbReference type="InterPro" id="IPR028343">
    <property type="entry name" value="FBPtase"/>
</dbReference>
<dbReference type="InterPro" id="IPR020548">
    <property type="entry name" value="Fructose_bisphosphatase_AS"/>
</dbReference>
<dbReference type="NCBIfam" id="NF006778">
    <property type="entry name" value="PRK09293.1-1"/>
    <property type="match status" value="1"/>
</dbReference>
<dbReference type="PANTHER" id="PTHR11556">
    <property type="entry name" value="FRUCTOSE-1,6-BISPHOSPHATASE-RELATED"/>
    <property type="match status" value="1"/>
</dbReference>
<dbReference type="PANTHER" id="PTHR11556:SF35">
    <property type="entry name" value="SEDOHEPTULOSE-1,7-BISPHOSPHATASE, CHLOROPLASTIC"/>
    <property type="match status" value="1"/>
</dbReference>
<dbReference type="Pfam" id="PF00316">
    <property type="entry name" value="FBPase"/>
    <property type="match status" value="1"/>
</dbReference>
<dbReference type="Pfam" id="PF18913">
    <property type="entry name" value="FBPase_C"/>
    <property type="match status" value="1"/>
</dbReference>
<dbReference type="PIRSF" id="PIRSF500210">
    <property type="entry name" value="FBPtase"/>
    <property type="match status" value="1"/>
</dbReference>
<dbReference type="PIRSF" id="PIRSF000904">
    <property type="entry name" value="FBPtase_SBPase"/>
    <property type="match status" value="1"/>
</dbReference>
<dbReference type="PRINTS" id="PR00115">
    <property type="entry name" value="F16BPHPHTASE"/>
</dbReference>
<dbReference type="SUPFAM" id="SSF56655">
    <property type="entry name" value="Carbohydrate phosphatase"/>
    <property type="match status" value="1"/>
</dbReference>
<dbReference type="PROSITE" id="PS00124">
    <property type="entry name" value="FBPASE"/>
    <property type="match status" value="1"/>
</dbReference>
<organism>
    <name type="scientific">Synechococcus elongatus (strain ATCC 33912 / PCC 7942 / FACHB-805)</name>
    <name type="common">Anacystis nidulans R2</name>
    <dbReference type="NCBI Taxonomy" id="1140"/>
    <lineage>
        <taxon>Bacteria</taxon>
        <taxon>Bacillati</taxon>
        <taxon>Cyanobacteriota</taxon>
        <taxon>Cyanophyceae</taxon>
        <taxon>Synechococcales</taxon>
        <taxon>Synechococcaceae</taxon>
        <taxon>Synechococcus</taxon>
    </lineage>
</organism>
<accession>Q59943</accession>
<accession>P96146</accession>
<accession>Q31KQ4</accession>
<gene>
    <name type="primary">fbp</name>
    <name type="ordered locus">Synpcc7942_2335</name>
</gene>
<reference key="1">
    <citation type="journal article" date="1995" name="FEMS Microbiol. Lett.">
        <title>A comparison of gene organization in the zwf region of the genomes of the cyanobacteria Synechococcus sp. PCC 7942 and Anabaena sp. PCC 7120.</title>
        <authorList>
            <person name="Newman J."/>
            <person name="Karakaya H."/>
            <person name="Scanlan D.J."/>
            <person name="Mann N.H."/>
        </authorList>
    </citation>
    <scope>NUCLEOTIDE SEQUENCE [GENOMIC DNA]</scope>
</reference>
<reference key="2">
    <citation type="journal article" date="1996" name="Arch. Biochem. Biophys.">
        <title>Molecular characterization and resistance to hydrogen peroxide of two fructose-1,6-bisphosphatases from Synechococcus PCC 7942.</title>
        <authorList>
            <person name="Tamoi M."/>
            <person name="Ishikawa T."/>
            <person name="Takeda T."/>
            <person name="Shigeoka S."/>
        </authorList>
    </citation>
    <scope>NUCLEOTIDE SEQUENCE [GENOMIC DNA]</scope>
    <scope>FUNCTION</scope>
    <scope>SUBUNIT</scope>
    <scope>ACTIVITY REGULATION</scope>
    <scope>BIOPHYSICOCHEMICAL PROPERTIES</scope>
</reference>
<reference key="3">
    <citation type="submission" date="2005-08" db="EMBL/GenBank/DDBJ databases">
        <title>Complete sequence of chromosome 1 of Synechococcus elongatus PCC 7942.</title>
        <authorList>
            <consortium name="US DOE Joint Genome Institute"/>
            <person name="Copeland A."/>
            <person name="Lucas S."/>
            <person name="Lapidus A."/>
            <person name="Barry K."/>
            <person name="Detter J.C."/>
            <person name="Glavina T."/>
            <person name="Hammon N."/>
            <person name="Israni S."/>
            <person name="Pitluck S."/>
            <person name="Schmutz J."/>
            <person name="Larimer F."/>
            <person name="Land M."/>
            <person name="Kyrpides N."/>
            <person name="Lykidis A."/>
            <person name="Golden S."/>
            <person name="Richardson P."/>
        </authorList>
    </citation>
    <scope>NUCLEOTIDE SEQUENCE [LARGE SCALE GENOMIC DNA]</scope>
    <source>
        <strain>ATCC 33912 / PCC 7942 / FACHB-805</strain>
    </source>
</reference>
<keyword id="KW-0113">Calvin cycle</keyword>
<keyword id="KW-0119">Carbohydrate metabolism</keyword>
<keyword id="KW-0963">Cytoplasm</keyword>
<keyword id="KW-0378">Hydrolase</keyword>
<keyword id="KW-0460">Magnesium</keyword>
<keyword id="KW-0479">Metal-binding</keyword>
<keyword id="KW-1185">Reference proteome</keyword>
<comment type="function">
    <text evidence="2">Catalyzes only the formation of fructose 6-phosphate by hydrolysis of fructose 1,6-bisphosphate.</text>
</comment>
<comment type="catalytic activity">
    <reaction>
        <text>beta-D-fructose 1,6-bisphosphate + H2O = beta-D-fructose 6-phosphate + phosphate</text>
        <dbReference type="Rhea" id="RHEA:11064"/>
        <dbReference type="ChEBI" id="CHEBI:15377"/>
        <dbReference type="ChEBI" id="CHEBI:32966"/>
        <dbReference type="ChEBI" id="CHEBI:43474"/>
        <dbReference type="ChEBI" id="CHEBI:57634"/>
        <dbReference type="EC" id="3.1.3.11"/>
    </reaction>
</comment>
<comment type="cofactor">
    <cofactor evidence="1">
        <name>Mg(2+)</name>
        <dbReference type="ChEBI" id="CHEBI:18420"/>
    </cofactor>
    <text evidence="1">Binds 2 magnesium ions per subunit.</text>
</comment>
<comment type="activity regulation">
    <text evidence="2">Not inhibited by AMP and slightly innibited by hydrogen peroxyde.</text>
</comment>
<comment type="biophysicochemical properties">
    <kinetics>
        <KM evidence="2">25 uM for fructose 1,6-bisphosphate (at pH 8)</KM>
    </kinetics>
    <phDependence>
        <text evidence="2">Optimum pH is 9. Activities at pH 8.0 and 9.5 were approx 67% and 85%, respectively, of that at pH 9.0.</text>
    </phDependence>
</comment>
<comment type="pathway">
    <text>Carbohydrate biosynthesis; Calvin cycle.</text>
</comment>
<comment type="subunit">
    <text evidence="2">Homotetramer.</text>
</comment>
<comment type="subcellular location">
    <subcellularLocation>
        <location evidence="3">Cytoplasm</location>
    </subcellularLocation>
</comment>
<comment type="similarity">
    <text evidence="3">Belongs to the FBPase class 1 family.</text>
</comment>
<name>F16PA_SYNE7</name>
<protein>
    <recommendedName>
        <fullName>Fructose-1,6-bisphosphatase class 1</fullName>
        <shortName>FBPase class 1</shortName>
        <ecNumber>3.1.3.11</ecNumber>
    </recommendedName>
    <alternativeName>
        <fullName>D-fructose-1,6-bisphosphate 1-phosphohydrolase class 1</fullName>
    </alternativeName>
    <alternativeName>
        <fullName>Fructose-1,6-bisphosphatase F-II</fullName>
    </alternativeName>
</protein>
<feature type="chain" id="PRO_0000200489" description="Fructose-1,6-bisphosphatase class 1">
    <location>
        <begin position="1"/>
        <end position="344"/>
    </location>
</feature>
<feature type="binding site" evidence="1">
    <location>
        <position position="107"/>
    </location>
    <ligand>
        <name>Mg(2+)</name>
        <dbReference type="ChEBI" id="CHEBI:18420"/>
        <label>1</label>
    </ligand>
</feature>
<feature type="binding site" evidence="1">
    <location>
        <position position="129"/>
    </location>
    <ligand>
        <name>Mg(2+)</name>
        <dbReference type="ChEBI" id="CHEBI:18420"/>
        <label>1</label>
    </ligand>
</feature>
<feature type="binding site" evidence="1">
    <location>
        <position position="129"/>
    </location>
    <ligand>
        <name>Mg(2+)</name>
        <dbReference type="ChEBI" id="CHEBI:18420"/>
        <label>2</label>
    </ligand>
</feature>
<feature type="binding site" evidence="1">
    <location>
        <position position="131"/>
    </location>
    <ligand>
        <name>Mg(2+)</name>
        <dbReference type="ChEBI" id="CHEBI:18420"/>
        <label>1</label>
    </ligand>
</feature>
<feature type="binding site" evidence="1">
    <location>
        <position position="132"/>
    </location>
    <ligand>
        <name>Mg(2+)</name>
        <dbReference type="ChEBI" id="CHEBI:18420"/>
        <label>2</label>
    </ligand>
</feature>
<feature type="binding site" evidence="1">
    <location>
        <position position="224"/>
    </location>
    <ligand>
        <name>substrate</name>
    </ligand>
</feature>
<feature type="binding site" evidence="1">
    <location>
        <position position="252"/>
    </location>
    <ligand>
        <name>substrate</name>
    </ligand>
</feature>
<feature type="binding site" evidence="1">
    <location>
        <position position="282"/>
    </location>
    <ligand>
        <name>substrate</name>
    </ligand>
</feature>
<feature type="binding site" evidence="1">
    <location>
        <position position="288"/>
    </location>
    <ligand>
        <name>Mg(2+)</name>
        <dbReference type="ChEBI" id="CHEBI:18420"/>
        <label>2</label>
    </ligand>
</feature>
<feature type="sequence conflict" description="In Ref. 2; BAA08536." evidence="3" ref="2">
    <original>L</original>
    <variation>F</variation>
    <location>
        <position position="29"/>
    </location>
</feature>
<feature type="sequence conflict" description="In Ref. 2; BAA08536." evidence="3" ref="2">
    <original>V</original>
    <variation>S</variation>
    <location>
        <position position="80"/>
    </location>
</feature>
<feature type="sequence conflict" description="In Ref. 2; BAA08536." evidence="3" ref="2">
    <original>WQWPEGYRQYIREMHRREGYSG</original>
    <variation>CSGPKVSPVHPGNASPRRLQR</variation>
    <location>
        <begin position="229"/>
        <end position="250"/>
    </location>
</feature>
<feature type="sequence conflict" description="In Ref. 1; AAA98846." evidence="3" ref="1">
    <original>G</original>
    <variation>A</variation>
    <location>
        <position position="247"/>
    </location>
</feature>
<feature type="sequence conflict" description="In Ref. 2; BAA08536." evidence="3" ref="2">
    <original>A</original>
    <variation>P</variation>
    <location>
        <position position="290"/>
    </location>
</feature>
<feature type="sequence conflict" description="In Ref. 2; BAA08536." evidence="3" ref="2">
    <original>E</original>
    <variation>R</variation>
    <location>
        <position position="320"/>
    </location>
</feature>
<feature type="sequence conflict" description="In Ref. 2; BAA08536." evidence="3" ref="2">
    <original>EACLAESVP</original>
    <variation>DSLLG</variation>
    <location>
        <begin position="336"/>
        <end position="344"/>
    </location>
</feature>